<name>DZI1L_RAT</name>
<gene>
    <name evidence="7" type="primary">Dzip1l</name>
</gene>
<proteinExistence type="evidence at protein level"/>
<sequence length="776" mass="88025">MQYSVATADGLSGPPSGAYTLPTFKFQPRRESIDWRRISAVDVDRVARELDVATLQENIAGVTFCNLDREVCNHCRQPVDPVLLKVLRLAQLIIEYLLHCQDCLSASVAQLEARLQASLGQQQRGQQELGRQADELKGVREESRRRRKMISTLQQLLLQTGAHSYHTCHLCDKTFMNATFLRGHIQRRHAGMAEVGKQKQEQQLGEVLEELRAKLKWTQGELEAQREAERQRQAQELEMIRQREIEAKKKFDEWKEKERSKLYGEIDKLKQLFWDEFKTVANQNSTLEEKLKVLQSYSMTESHLGSLRDEESEERLKHAQELQALREKMDIQKTEWKRKMKALHEERAAERRQLQEENERLHVTLSQDQKKAAAQSQRHINALRAQLQEQARLIESQEETIQTLSFRRMEEVQEVPKAVVTEEDSSEEELEASLEEQQEQRKVLAALRNNPAWLKQFRPILEDTLEEKLEGMGIKRGTKGISAQTVRRLEPLLRTQREQTARSFREFLSLREKLNQEVSSRAKKRWEGTAVVPQPDGQPPVKSQRTTLATREVRPKTRTLTVALPSKPAEPSTSTPRGHSSHGPGLTQVSTPIPRPRVHGPSSTPVSPGPGLSTPPFSSEEEPEGDVVQRVSLQPPKVLPRSAPQPEDNWGWSDSETSEESAQSPGKGSDGLASSATLVQSMVKNLEKQLETPAKKPSGGVNMFLRPNTALQRSSTPARKTQLSEDESDLEISSLEDLSHDLGPKGKPTPLSHSKLPEKFDASPWSSGSRPRIPGW</sequence>
<evidence type="ECO:0000250" key="1">
    <source>
        <dbReference type="UniProtKB" id="Q499E4"/>
    </source>
</evidence>
<evidence type="ECO:0000250" key="2">
    <source>
        <dbReference type="UniProtKB" id="Q8IYY4"/>
    </source>
</evidence>
<evidence type="ECO:0000255" key="3"/>
<evidence type="ECO:0000255" key="4">
    <source>
        <dbReference type="PROSITE-ProRule" id="PRU00042"/>
    </source>
</evidence>
<evidence type="ECO:0000256" key="5">
    <source>
        <dbReference type="SAM" id="MobiDB-lite"/>
    </source>
</evidence>
<evidence type="ECO:0000305" key="6"/>
<evidence type="ECO:0000312" key="7">
    <source>
        <dbReference type="RGD" id="1311430"/>
    </source>
</evidence>
<comment type="function">
    <text evidence="2">Involved in primary cilium formation. Probably acts as a transition zone protein required for localization of PKD1/PC1 and PKD2/PC2 to the ciliary membrane.</text>
</comment>
<comment type="subunit">
    <text evidence="2">Interacts with SEPTIN2.</text>
</comment>
<comment type="subcellular location">
    <subcellularLocation>
        <location evidence="2">Cytoplasm</location>
        <location evidence="2">Cytoskeleton</location>
        <location evidence="2">Cilium basal body</location>
    </subcellularLocation>
    <subcellularLocation>
        <location evidence="2">Cytoplasm</location>
        <location evidence="2">Cytoskeleton</location>
        <location evidence="2">Microtubule organizing center</location>
        <location evidence="2">Centrosome</location>
        <location evidence="2">Centriole</location>
    </subcellularLocation>
    <text evidence="2">Localizes to centrioles and to the distal ends of basal bodies.</text>
</comment>
<comment type="similarity">
    <text evidence="6">Belongs to the DZIP C2H2-type zinc-finger protein family.</text>
</comment>
<keyword id="KW-0966">Cell projection</keyword>
<keyword id="KW-0969">Cilium</keyword>
<keyword id="KW-0175">Coiled coil</keyword>
<keyword id="KW-0963">Cytoplasm</keyword>
<keyword id="KW-0206">Cytoskeleton</keyword>
<keyword id="KW-0479">Metal-binding</keyword>
<keyword id="KW-0597">Phosphoprotein</keyword>
<keyword id="KW-1185">Reference proteome</keyword>
<keyword id="KW-0862">Zinc</keyword>
<keyword id="KW-0863">Zinc-finger</keyword>
<feature type="chain" id="PRO_0000331308" description="Cilium assembly protein DZIP1L">
    <location>
        <begin position="1"/>
        <end position="776"/>
    </location>
</feature>
<feature type="zinc finger region" description="C2H2-type" evidence="4">
    <location>
        <begin position="166"/>
        <end position="189"/>
    </location>
</feature>
<feature type="region of interest" description="Disordered" evidence="5">
    <location>
        <begin position="520"/>
        <end position="776"/>
    </location>
</feature>
<feature type="coiled-coil region" evidence="3">
    <location>
        <begin position="196"/>
        <end position="450"/>
    </location>
</feature>
<feature type="compositionally biased region" description="Low complexity" evidence="5">
    <location>
        <begin position="600"/>
        <end position="618"/>
    </location>
</feature>
<feature type="compositionally biased region" description="Polar residues" evidence="5">
    <location>
        <begin position="652"/>
        <end position="683"/>
    </location>
</feature>
<feature type="compositionally biased region" description="Basic and acidic residues" evidence="5">
    <location>
        <begin position="685"/>
        <end position="694"/>
    </location>
</feature>
<feature type="compositionally biased region" description="Polar residues" evidence="5">
    <location>
        <begin position="709"/>
        <end position="721"/>
    </location>
</feature>
<feature type="modified residue" description="Phosphoserine" evidence="1">
    <location>
        <position position="425"/>
    </location>
</feature>
<feature type="modified residue" description="Phosphoserine" evidence="1">
    <location>
        <position position="426"/>
    </location>
</feature>
<protein>
    <recommendedName>
        <fullName evidence="6">Cilium assembly protein DZIP1L</fullName>
    </recommendedName>
    <alternativeName>
        <fullName evidence="7">DAZ-interacting zinc finger protein 1-like</fullName>
    </alternativeName>
</protein>
<reference key="1">
    <citation type="journal article" date="2004" name="Genome Res.">
        <title>The status, quality, and expansion of the NIH full-length cDNA project: the Mammalian Gene Collection (MGC).</title>
        <authorList>
            <consortium name="The MGC Project Team"/>
        </authorList>
    </citation>
    <scope>NUCLEOTIDE SEQUENCE [LARGE SCALE MRNA]</scope>
    <source>
        <tissue>Lung</tissue>
    </source>
</reference>
<reference key="2">
    <citation type="journal article" date="2012" name="Nat. Commun.">
        <title>Quantitative maps of protein phosphorylation sites across 14 different rat organs and tissues.</title>
        <authorList>
            <person name="Lundby A."/>
            <person name="Secher A."/>
            <person name="Lage K."/>
            <person name="Nordsborg N.B."/>
            <person name="Dmytriyev A."/>
            <person name="Lundby C."/>
            <person name="Olsen J.V."/>
        </authorList>
    </citation>
    <scope>IDENTIFICATION BY MASS SPECTROMETRY [LARGE SCALE ANALYSIS]</scope>
</reference>
<dbReference type="EMBL" id="BC083786">
    <property type="protein sequence ID" value="AAH83786.1"/>
    <property type="molecule type" value="mRNA"/>
</dbReference>
<dbReference type="RefSeq" id="NP_001014117.1">
    <property type="nucleotide sequence ID" value="NM_001014095.1"/>
</dbReference>
<dbReference type="RefSeq" id="XP_063121663.1">
    <property type="nucleotide sequence ID" value="XM_063265593.1"/>
</dbReference>
<dbReference type="RefSeq" id="XP_063121664.1">
    <property type="nucleotide sequence ID" value="XM_063265594.1"/>
</dbReference>
<dbReference type="SMR" id="Q5XIA0"/>
<dbReference type="FunCoup" id="Q5XIA0">
    <property type="interactions" value="216"/>
</dbReference>
<dbReference type="STRING" id="10116.ENSRNOP00000074346"/>
<dbReference type="iPTMnet" id="Q5XIA0"/>
<dbReference type="PhosphoSitePlus" id="Q5XIA0"/>
<dbReference type="jPOST" id="Q5XIA0"/>
<dbReference type="PaxDb" id="10116-ENSRNOP00000019902"/>
<dbReference type="GeneID" id="315952"/>
<dbReference type="KEGG" id="rno:315952"/>
<dbReference type="UCSC" id="RGD:1311430">
    <property type="organism name" value="rat"/>
</dbReference>
<dbReference type="AGR" id="RGD:1311430"/>
<dbReference type="CTD" id="199221"/>
<dbReference type="RGD" id="1311430">
    <property type="gene designation" value="Dzip1l"/>
</dbReference>
<dbReference type="VEuPathDB" id="HostDB:ENSRNOG00000014746"/>
<dbReference type="eggNOG" id="ENOG502QRAI">
    <property type="taxonomic scope" value="Eukaryota"/>
</dbReference>
<dbReference type="InParanoid" id="Q5XIA0"/>
<dbReference type="PhylomeDB" id="Q5XIA0"/>
<dbReference type="PRO" id="PR:Q5XIA0"/>
<dbReference type="Proteomes" id="UP000002494">
    <property type="component" value="Chromosome 8"/>
</dbReference>
<dbReference type="Bgee" id="ENSRNOG00000014746">
    <property type="expression patterns" value="Expressed in skeletal muscle tissue and 18 other cell types or tissues"/>
</dbReference>
<dbReference type="GO" id="GO:0005930">
    <property type="term" value="C:axoneme"/>
    <property type="evidence" value="ECO:0000266"/>
    <property type="project" value="RGD"/>
</dbReference>
<dbReference type="GO" id="GO:0005814">
    <property type="term" value="C:centriole"/>
    <property type="evidence" value="ECO:0000250"/>
    <property type="project" value="UniProtKB"/>
</dbReference>
<dbReference type="GO" id="GO:0036064">
    <property type="term" value="C:ciliary basal body"/>
    <property type="evidence" value="ECO:0000250"/>
    <property type="project" value="UniProtKB"/>
</dbReference>
<dbReference type="GO" id="GO:0005737">
    <property type="term" value="C:cytoplasm"/>
    <property type="evidence" value="ECO:0000318"/>
    <property type="project" value="GO_Central"/>
</dbReference>
<dbReference type="GO" id="GO:0008270">
    <property type="term" value="F:zinc ion binding"/>
    <property type="evidence" value="ECO:0007669"/>
    <property type="project" value="UniProtKB-KW"/>
</dbReference>
<dbReference type="GO" id="GO:1905349">
    <property type="term" value="P:ciliary transition zone assembly"/>
    <property type="evidence" value="ECO:0000266"/>
    <property type="project" value="RGD"/>
</dbReference>
<dbReference type="GO" id="GO:0060271">
    <property type="term" value="P:cilium assembly"/>
    <property type="evidence" value="ECO:0000250"/>
    <property type="project" value="UniProtKB"/>
</dbReference>
<dbReference type="GO" id="GO:0033504">
    <property type="term" value="P:floor plate development"/>
    <property type="evidence" value="ECO:0000266"/>
    <property type="project" value="RGD"/>
</dbReference>
<dbReference type="GO" id="GO:0021532">
    <property type="term" value="P:neural tube patterning"/>
    <property type="evidence" value="ECO:0000266"/>
    <property type="project" value="RGD"/>
</dbReference>
<dbReference type="GO" id="GO:0061512">
    <property type="term" value="P:protein localization to cilium"/>
    <property type="evidence" value="ECO:0000266"/>
    <property type="project" value="RGD"/>
</dbReference>
<dbReference type="GO" id="GO:0033365">
    <property type="term" value="P:protein localization to organelle"/>
    <property type="evidence" value="ECO:0000266"/>
    <property type="project" value="RGD"/>
</dbReference>
<dbReference type="GO" id="GO:0032880">
    <property type="term" value="P:regulation of protein localization"/>
    <property type="evidence" value="ECO:0000250"/>
    <property type="project" value="UniProtKB"/>
</dbReference>
<dbReference type="GO" id="GO:0007224">
    <property type="term" value="P:smoothened signaling pathway"/>
    <property type="evidence" value="ECO:0000266"/>
    <property type="project" value="RGD"/>
</dbReference>
<dbReference type="InterPro" id="IPR032714">
    <property type="entry name" value="DZIP1_N"/>
</dbReference>
<dbReference type="InterPro" id="IPR051241">
    <property type="entry name" value="DZIP_RILPL"/>
</dbReference>
<dbReference type="InterPro" id="IPR013087">
    <property type="entry name" value="Znf_C2H2_type"/>
</dbReference>
<dbReference type="PANTHER" id="PTHR21502:SF8">
    <property type="entry name" value="CILIUM ASSEMBLY PROTEIN DZIP1L"/>
    <property type="match status" value="1"/>
</dbReference>
<dbReference type="PANTHER" id="PTHR21502">
    <property type="entry name" value="ZINC FINGER PROTEIN DZIP1"/>
    <property type="match status" value="1"/>
</dbReference>
<dbReference type="Pfam" id="PF13815">
    <property type="entry name" value="Dzip-like_N"/>
    <property type="match status" value="1"/>
</dbReference>
<dbReference type="PROSITE" id="PS00028">
    <property type="entry name" value="ZINC_FINGER_C2H2_1"/>
    <property type="match status" value="1"/>
</dbReference>
<dbReference type="PROSITE" id="PS50157">
    <property type="entry name" value="ZINC_FINGER_C2H2_2"/>
    <property type="match status" value="1"/>
</dbReference>
<accession>Q5XIA0</accession>
<organism>
    <name type="scientific">Rattus norvegicus</name>
    <name type="common">Rat</name>
    <dbReference type="NCBI Taxonomy" id="10116"/>
    <lineage>
        <taxon>Eukaryota</taxon>
        <taxon>Metazoa</taxon>
        <taxon>Chordata</taxon>
        <taxon>Craniata</taxon>
        <taxon>Vertebrata</taxon>
        <taxon>Euteleostomi</taxon>
        <taxon>Mammalia</taxon>
        <taxon>Eutheria</taxon>
        <taxon>Euarchontoglires</taxon>
        <taxon>Glires</taxon>
        <taxon>Rodentia</taxon>
        <taxon>Myomorpha</taxon>
        <taxon>Muroidea</taxon>
        <taxon>Muridae</taxon>
        <taxon>Murinae</taxon>
        <taxon>Rattus</taxon>
    </lineage>
</organism>